<organism>
    <name type="scientific">Ligilactobacillus salivarius (strain UCC118)</name>
    <name type="common">Lactobacillus salivarius</name>
    <dbReference type="NCBI Taxonomy" id="362948"/>
    <lineage>
        <taxon>Bacteria</taxon>
        <taxon>Bacillati</taxon>
        <taxon>Bacillota</taxon>
        <taxon>Bacilli</taxon>
        <taxon>Lactobacillales</taxon>
        <taxon>Lactobacillaceae</taxon>
        <taxon>Ligilactobacillus</taxon>
    </lineage>
</organism>
<accession>Q1WSZ9</accession>
<gene>
    <name evidence="1" type="primary">glmM</name>
    <name type="ordered locus">LSL_1144</name>
</gene>
<evidence type="ECO:0000255" key="1">
    <source>
        <dbReference type="HAMAP-Rule" id="MF_01554"/>
    </source>
</evidence>
<feature type="chain" id="PRO_0000305647" description="Phosphoglucosamine mutase">
    <location>
        <begin position="1"/>
        <end position="450"/>
    </location>
</feature>
<feature type="active site" description="Phosphoserine intermediate" evidence="1">
    <location>
        <position position="101"/>
    </location>
</feature>
<feature type="binding site" description="via phosphate group" evidence="1">
    <location>
        <position position="101"/>
    </location>
    <ligand>
        <name>Mg(2+)</name>
        <dbReference type="ChEBI" id="CHEBI:18420"/>
    </ligand>
</feature>
<feature type="binding site" evidence="1">
    <location>
        <position position="241"/>
    </location>
    <ligand>
        <name>Mg(2+)</name>
        <dbReference type="ChEBI" id="CHEBI:18420"/>
    </ligand>
</feature>
<feature type="binding site" evidence="1">
    <location>
        <position position="243"/>
    </location>
    <ligand>
        <name>Mg(2+)</name>
        <dbReference type="ChEBI" id="CHEBI:18420"/>
    </ligand>
</feature>
<feature type="binding site" evidence="1">
    <location>
        <position position="245"/>
    </location>
    <ligand>
        <name>Mg(2+)</name>
        <dbReference type="ChEBI" id="CHEBI:18420"/>
    </ligand>
</feature>
<feature type="modified residue" description="Phosphoserine" evidence="1">
    <location>
        <position position="101"/>
    </location>
</feature>
<name>GLMM_LIGS1</name>
<comment type="function">
    <text evidence="1">Catalyzes the conversion of glucosamine-6-phosphate to glucosamine-1-phosphate.</text>
</comment>
<comment type="catalytic activity">
    <reaction evidence="1">
        <text>alpha-D-glucosamine 1-phosphate = D-glucosamine 6-phosphate</text>
        <dbReference type="Rhea" id="RHEA:23424"/>
        <dbReference type="ChEBI" id="CHEBI:58516"/>
        <dbReference type="ChEBI" id="CHEBI:58725"/>
        <dbReference type="EC" id="5.4.2.10"/>
    </reaction>
</comment>
<comment type="cofactor">
    <cofactor evidence="1">
        <name>Mg(2+)</name>
        <dbReference type="ChEBI" id="CHEBI:18420"/>
    </cofactor>
    <text evidence="1">Binds 1 Mg(2+) ion per subunit.</text>
</comment>
<comment type="PTM">
    <text evidence="1">Activated by phosphorylation.</text>
</comment>
<comment type="similarity">
    <text evidence="1">Belongs to the phosphohexose mutase family.</text>
</comment>
<protein>
    <recommendedName>
        <fullName evidence="1">Phosphoglucosamine mutase</fullName>
        <ecNumber evidence="1">5.4.2.10</ecNumber>
    </recommendedName>
</protein>
<proteinExistence type="inferred from homology"/>
<dbReference type="EC" id="5.4.2.10" evidence="1"/>
<dbReference type="EMBL" id="CP000233">
    <property type="protein sequence ID" value="ABD99952.1"/>
    <property type="molecule type" value="Genomic_DNA"/>
</dbReference>
<dbReference type="RefSeq" id="WP_003700589.1">
    <property type="nucleotide sequence ID" value="NC_007929.1"/>
</dbReference>
<dbReference type="RefSeq" id="YP_536035.1">
    <property type="nucleotide sequence ID" value="NC_007929.1"/>
</dbReference>
<dbReference type="SMR" id="Q1WSZ9"/>
<dbReference type="STRING" id="362948.LSL_1144"/>
<dbReference type="KEGG" id="lsl:LSL_1144"/>
<dbReference type="PATRIC" id="fig|362948.14.peg.1218"/>
<dbReference type="HOGENOM" id="CLU_016950_7_0_9"/>
<dbReference type="OrthoDB" id="9806956at2"/>
<dbReference type="Proteomes" id="UP000006559">
    <property type="component" value="Chromosome"/>
</dbReference>
<dbReference type="GO" id="GO:0005829">
    <property type="term" value="C:cytosol"/>
    <property type="evidence" value="ECO:0007669"/>
    <property type="project" value="TreeGrafter"/>
</dbReference>
<dbReference type="GO" id="GO:0000287">
    <property type="term" value="F:magnesium ion binding"/>
    <property type="evidence" value="ECO:0007669"/>
    <property type="project" value="UniProtKB-UniRule"/>
</dbReference>
<dbReference type="GO" id="GO:0008966">
    <property type="term" value="F:phosphoglucosamine mutase activity"/>
    <property type="evidence" value="ECO:0007669"/>
    <property type="project" value="UniProtKB-UniRule"/>
</dbReference>
<dbReference type="GO" id="GO:0004615">
    <property type="term" value="F:phosphomannomutase activity"/>
    <property type="evidence" value="ECO:0007669"/>
    <property type="project" value="TreeGrafter"/>
</dbReference>
<dbReference type="GO" id="GO:0005975">
    <property type="term" value="P:carbohydrate metabolic process"/>
    <property type="evidence" value="ECO:0007669"/>
    <property type="project" value="InterPro"/>
</dbReference>
<dbReference type="GO" id="GO:0009252">
    <property type="term" value="P:peptidoglycan biosynthetic process"/>
    <property type="evidence" value="ECO:0007669"/>
    <property type="project" value="TreeGrafter"/>
</dbReference>
<dbReference type="GO" id="GO:0006048">
    <property type="term" value="P:UDP-N-acetylglucosamine biosynthetic process"/>
    <property type="evidence" value="ECO:0007669"/>
    <property type="project" value="TreeGrafter"/>
</dbReference>
<dbReference type="CDD" id="cd05802">
    <property type="entry name" value="GlmM"/>
    <property type="match status" value="1"/>
</dbReference>
<dbReference type="FunFam" id="3.30.310.50:FF:000001">
    <property type="entry name" value="Phosphoglucosamine mutase"/>
    <property type="match status" value="1"/>
</dbReference>
<dbReference type="FunFam" id="3.40.120.10:FF:000001">
    <property type="entry name" value="Phosphoglucosamine mutase"/>
    <property type="match status" value="1"/>
</dbReference>
<dbReference type="FunFam" id="3.40.120.10:FF:000002">
    <property type="entry name" value="Phosphoglucosamine mutase"/>
    <property type="match status" value="1"/>
</dbReference>
<dbReference type="Gene3D" id="3.40.120.10">
    <property type="entry name" value="Alpha-D-Glucose-1,6-Bisphosphate, subunit A, domain 3"/>
    <property type="match status" value="3"/>
</dbReference>
<dbReference type="Gene3D" id="3.30.310.50">
    <property type="entry name" value="Alpha-D-phosphohexomutase, C-terminal domain"/>
    <property type="match status" value="1"/>
</dbReference>
<dbReference type="HAMAP" id="MF_01554_B">
    <property type="entry name" value="GlmM_B"/>
    <property type="match status" value="1"/>
</dbReference>
<dbReference type="InterPro" id="IPR005844">
    <property type="entry name" value="A-D-PHexomutase_a/b/a-I"/>
</dbReference>
<dbReference type="InterPro" id="IPR016055">
    <property type="entry name" value="A-D-PHexomutase_a/b/a-I/II/III"/>
</dbReference>
<dbReference type="InterPro" id="IPR005845">
    <property type="entry name" value="A-D-PHexomutase_a/b/a-II"/>
</dbReference>
<dbReference type="InterPro" id="IPR005846">
    <property type="entry name" value="A-D-PHexomutase_a/b/a-III"/>
</dbReference>
<dbReference type="InterPro" id="IPR005843">
    <property type="entry name" value="A-D-PHexomutase_C"/>
</dbReference>
<dbReference type="InterPro" id="IPR036900">
    <property type="entry name" value="A-D-PHexomutase_C_sf"/>
</dbReference>
<dbReference type="InterPro" id="IPR016066">
    <property type="entry name" value="A-D-PHexomutase_CS"/>
</dbReference>
<dbReference type="InterPro" id="IPR005841">
    <property type="entry name" value="Alpha-D-phosphohexomutase_SF"/>
</dbReference>
<dbReference type="InterPro" id="IPR006352">
    <property type="entry name" value="GlmM_bact"/>
</dbReference>
<dbReference type="InterPro" id="IPR050060">
    <property type="entry name" value="Phosphoglucosamine_mutase"/>
</dbReference>
<dbReference type="NCBIfam" id="TIGR01455">
    <property type="entry name" value="glmM"/>
    <property type="match status" value="1"/>
</dbReference>
<dbReference type="NCBIfam" id="NF008139">
    <property type="entry name" value="PRK10887.1"/>
    <property type="match status" value="1"/>
</dbReference>
<dbReference type="PANTHER" id="PTHR42946:SF1">
    <property type="entry name" value="PHOSPHOGLUCOMUTASE (ALPHA-D-GLUCOSE-1,6-BISPHOSPHATE-DEPENDENT)"/>
    <property type="match status" value="1"/>
</dbReference>
<dbReference type="PANTHER" id="PTHR42946">
    <property type="entry name" value="PHOSPHOHEXOSE MUTASE"/>
    <property type="match status" value="1"/>
</dbReference>
<dbReference type="Pfam" id="PF02878">
    <property type="entry name" value="PGM_PMM_I"/>
    <property type="match status" value="1"/>
</dbReference>
<dbReference type="Pfam" id="PF02879">
    <property type="entry name" value="PGM_PMM_II"/>
    <property type="match status" value="1"/>
</dbReference>
<dbReference type="Pfam" id="PF02880">
    <property type="entry name" value="PGM_PMM_III"/>
    <property type="match status" value="1"/>
</dbReference>
<dbReference type="Pfam" id="PF00408">
    <property type="entry name" value="PGM_PMM_IV"/>
    <property type="match status" value="1"/>
</dbReference>
<dbReference type="PRINTS" id="PR00509">
    <property type="entry name" value="PGMPMM"/>
</dbReference>
<dbReference type="SUPFAM" id="SSF55957">
    <property type="entry name" value="Phosphoglucomutase, C-terminal domain"/>
    <property type="match status" value="1"/>
</dbReference>
<dbReference type="SUPFAM" id="SSF53738">
    <property type="entry name" value="Phosphoglucomutase, first 3 domains"/>
    <property type="match status" value="3"/>
</dbReference>
<dbReference type="PROSITE" id="PS00710">
    <property type="entry name" value="PGM_PMM"/>
    <property type="match status" value="1"/>
</dbReference>
<keyword id="KW-0413">Isomerase</keyword>
<keyword id="KW-0460">Magnesium</keyword>
<keyword id="KW-0479">Metal-binding</keyword>
<keyword id="KW-0597">Phosphoprotein</keyword>
<keyword id="KW-1185">Reference proteome</keyword>
<reference key="1">
    <citation type="journal article" date="2006" name="Proc. Natl. Acad. Sci. U.S.A.">
        <title>Multireplicon genome architecture of Lactobacillus salivarius.</title>
        <authorList>
            <person name="Claesson M.J."/>
            <person name="Li Y."/>
            <person name="Leahy S."/>
            <person name="Canchaya C."/>
            <person name="van Pijkeren J.P."/>
            <person name="Cerdeno-Tarraga A.M."/>
            <person name="Parkhill J."/>
            <person name="Flynn S."/>
            <person name="O'Sullivan G.C."/>
            <person name="Collins J.K."/>
            <person name="Higgins D."/>
            <person name="Shanahan F."/>
            <person name="Fitzgerald G.F."/>
            <person name="van Sinderen D."/>
            <person name="O'Toole P.W."/>
        </authorList>
    </citation>
    <scope>NUCLEOTIDE SEQUENCE [LARGE SCALE GENOMIC DNA]</scope>
    <source>
        <strain>UCC118</strain>
    </source>
</reference>
<sequence length="450" mass="48571">MKYFGTDGVRGIANETLSPELAFKLGRCGGYVLTQHASNKPARVLVARDTRISGQMLEQALIAGLLSVGIEVFSLGVMTTPGVAYLVRLQDADAGIMISASHNPVQDNGIKFFGSDGYKLSDEKEEEIEALLESDEDTLPRPSAEGLGTLSDYREGALKYTQFLEQTIPDDLEGMHIAVDGANGSTSALVSRLFADLGADFDTMATNPDGLNINKGVGSTHPEALAKFVVEKGAQVGVAFDGDGDRCIAVDENGEIVDGDKIMFICGKYLSERGRLKKDTIVTTVMSNIGLYKAMKENNLNSVQTKVGDRYVVEAMRKDGYNVGGEQSGHVVFLDFNTTGDGMLTALQLLNVIKQTGKKLSELAAEVKTYPQELVNIKVTDKKAALDNEKIKEAIAKVEEKMAGDGRVLVRPSGTEDLLRVMAEAKTQELVHDYVMEIADVVEAEMGVNE</sequence>